<sequence>MTVVRLPDGTDRVFDNSVTVREVAESISPGLARAALAGKLNGKLVDLSEQIETDSDLVLITDKDSEGLEIIRHSCAHLLAHAVKELFPGTQVTIGPVIENGFYYDFSYERPFTPEDLVAIEKRMQEISKRALKIERKVWDRSRAINFFKDIGEHYKAQIIESIPDNEPVSLYSQGDFTDLCRGPHVPYTSKIKVFKLMKIAGAYWRGDSKNEMLQRIYGTAWVSNEEQNNYLRCLEEAEKRDHRKLGKQLDLFHTQEEAPGMVYWHPKGWVVWQQIEQYMRQTLAGNGYVEIRTPQVLDRSLWESSGHWENFRENMFITESENRHYAIKPMNCPGHVQVFNHGLRSYRDLPLRLAEFGSCHRNEASGALHGLMRVRSFTQDDAHIFCTEDQILGEVTKFIDLLNQVYINFGFSETLIKLSTRPLKRVGTEDQWDKAETALATALNQKELNWEVQPGEGAFYGPKIEFTLKDSLGRKWQCGTLQLDFSMPARLGAGYIAEDNTRKIPVMLHRAILGSMERFIGILIEHHAGALPLWLSPEQVIILNISRNQAEYAQLITDELKQSGIRASSDLRNEKISYKIREHSMQKIPYLMVVGDKEMENRTVTVRGRAGQDYGAMSVESFVVRAQEEIAKRL</sequence>
<organism>
    <name type="scientific">Nitrosomonas europaea (strain ATCC 19718 / CIP 103999 / KCTC 2705 / NBRC 14298)</name>
    <dbReference type="NCBI Taxonomy" id="228410"/>
    <lineage>
        <taxon>Bacteria</taxon>
        <taxon>Pseudomonadati</taxon>
        <taxon>Pseudomonadota</taxon>
        <taxon>Betaproteobacteria</taxon>
        <taxon>Nitrosomonadales</taxon>
        <taxon>Nitrosomonadaceae</taxon>
        <taxon>Nitrosomonas</taxon>
    </lineage>
</organism>
<name>SYT_NITEU</name>
<reference key="1">
    <citation type="journal article" date="2003" name="J. Bacteriol.">
        <title>Complete genome sequence of the ammonia-oxidizing bacterium and obligate chemolithoautotroph Nitrosomonas europaea.</title>
        <authorList>
            <person name="Chain P."/>
            <person name="Lamerdin J.E."/>
            <person name="Larimer F.W."/>
            <person name="Regala W."/>
            <person name="Lao V."/>
            <person name="Land M.L."/>
            <person name="Hauser L."/>
            <person name="Hooper A.B."/>
            <person name="Klotz M.G."/>
            <person name="Norton J."/>
            <person name="Sayavedra-Soto L.A."/>
            <person name="Arciero D.M."/>
            <person name="Hommes N.G."/>
            <person name="Whittaker M.M."/>
            <person name="Arp D.J."/>
        </authorList>
    </citation>
    <scope>NUCLEOTIDE SEQUENCE [LARGE SCALE GENOMIC DNA]</scope>
    <source>
        <strain>ATCC 19718 / CIP 103999 / KCTC 2705 / NBRC 14298</strain>
    </source>
</reference>
<gene>
    <name evidence="1" type="primary">thrS</name>
    <name type="ordered locus">NE0958</name>
</gene>
<proteinExistence type="inferred from homology"/>
<dbReference type="EC" id="6.1.1.3" evidence="1"/>
<dbReference type="EMBL" id="AL954747">
    <property type="protein sequence ID" value="CAD84869.1"/>
    <property type="molecule type" value="Genomic_DNA"/>
</dbReference>
<dbReference type="RefSeq" id="WP_011111567.1">
    <property type="nucleotide sequence ID" value="NC_004757.1"/>
</dbReference>
<dbReference type="SMR" id="Q82VV1"/>
<dbReference type="STRING" id="228410.NE0958"/>
<dbReference type="GeneID" id="87104150"/>
<dbReference type="KEGG" id="neu:NE0958"/>
<dbReference type="eggNOG" id="COG0441">
    <property type="taxonomic scope" value="Bacteria"/>
</dbReference>
<dbReference type="HOGENOM" id="CLU_008554_0_1_4"/>
<dbReference type="OrthoDB" id="9802304at2"/>
<dbReference type="PhylomeDB" id="Q82VV1"/>
<dbReference type="Proteomes" id="UP000001416">
    <property type="component" value="Chromosome"/>
</dbReference>
<dbReference type="GO" id="GO:0005737">
    <property type="term" value="C:cytoplasm"/>
    <property type="evidence" value="ECO:0007669"/>
    <property type="project" value="UniProtKB-SubCell"/>
</dbReference>
<dbReference type="GO" id="GO:0005524">
    <property type="term" value="F:ATP binding"/>
    <property type="evidence" value="ECO:0007669"/>
    <property type="project" value="UniProtKB-UniRule"/>
</dbReference>
<dbReference type="GO" id="GO:0046872">
    <property type="term" value="F:metal ion binding"/>
    <property type="evidence" value="ECO:0007669"/>
    <property type="project" value="UniProtKB-KW"/>
</dbReference>
<dbReference type="GO" id="GO:0004829">
    <property type="term" value="F:threonine-tRNA ligase activity"/>
    <property type="evidence" value="ECO:0007669"/>
    <property type="project" value="UniProtKB-UniRule"/>
</dbReference>
<dbReference type="GO" id="GO:0000049">
    <property type="term" value="F:tRNA binding"/>
    <property type="evidence" value="ECO:0007669"/>
    <property type="project" value="UniProtKB-KW"/>
</dbReference>
<dbReference type="GO" id="GO:0006435">
    <property type="term" value="P:threonyl-tRNA aminoacylation"/>
    <property type="evidence" value="ECO:0007669"/>
    <property type="project" value="UniProtKB-UniRule"/>
</dbReference>
<dbReference type="CDD" id="cd01667">
    <property type="entry name" value="TGS_ThrRS"/>
    <property type="match status" value="1"/>
</dbReference>
<dbReference type="CDD" id="cd00860">
    <property type="entry name" value="ThrRS_anticodon"/>
    <property type="match status" value="1"/>
</dbReference>
<dbReference type="CDD" id="cd00771">
    <property type="entry name" value="ThrRS_core"/>
    <property type="match status" value="1"/>
</dbReference>
<dbReference type="FunFam" id="3.10.20.30:FF:000005">
    <property type="entry name" value="Threonine--tRNA ligase"/>
    <property type="match status" value="1"/>
</dbReference>
<dbReference type="FunFam" id="3.30.54.20:FF:000002">
    <property type="entry name" value="Threonine--tRNA ligase"/>
    <property type="match status" value="1"/>
</dbReference>
<dbReference type="FunFam" id="3.30.930.10:FF:000002">
    <property type="entry name" value="Threonine--tRNA ligase"/>
    <property type="match status" value="1"/>
</dbReference>
<dbReference type="FunFam" id="3.40.50.800:FF:000001">
    <property type="entry name" value="Threonine--tRNA ligase"/>
    <property type="match status" value="1"/>
</dbReference>
<dbReference type="FunFam" id="3.30.980.10:FF:000005">
    <property type="entry name" value="Threonyl-tRNA synthetase, mitochondrial"/>
    <property type="match status" value="1"/>
</dbReference>
<dbReference type="Gene3D" id="3.10.20.30">
    <property type="match status" value="1"/>
</dbReference>
<dbReference type="Gene3D" id="3.30.54.20">
    <property type="match status" value="1"/>
</dbReference>
<dbReference type="Gene3D" id="3.40.50.800">
    <property type="entry name" value="Anticodon-binding domain"/>
    <property type="match status" value="1"/>
</dbReference>
<dbReference type="Gene3D" id="3.30.930.10">
    <property type="entry name" value="Bira Bifunctional Protein, Domain 2"/>
    <property type="match status" value="1"/>
</dbReference>
<dbReference type="Gene3D" id="3.30.980.10">
    <property type="entry name" value="Threonyl-trna Synthetase, Chain A, domain 2"/>
    <property type="match status" value="1"/>
</dbReference>
<dbReference type="HAMAP" id="MF_00184">
    <property type="entry name" value="Thr_tRNA_synth"/>
    <property type="match status" value="1"/>
</dbReference>
<dbReference type="InterPro" id="IPR002314">
    <property type="entry name" value="aa-tRNA-synt_IIb"/>
</dbReference>
<dbReference type="InterPro" id="IPR006195">
    <property type="entry name" value="aa-tRNA-synth_II"/>
</dbReference>
<dbReference type="InterPro" id="IPR045864">
    <property type="entry name" value="aa-tRNA-synth_II/BPL/LPL"/>
</dbReference>
<dbReference type="InterPro" id="IPR004154">
    <property type="entry name" value="Anticodon-bd"/>
</dbReference>
<dbReference type="InterPro" id="IPR036621">
    <property type="entry name" value="Anticodon-bd_dom_sf"/>
</dbReference>
<dbReference type="InterPro" id="IPR012675">
    <property type="entry name" value="Beta-grasp_dom_sf"/>
</dbReference>
<dbReference type="InterPro" id="IPR004095">
    <property type="entry name" value="TGS"/>
</dbReference>
<dbReference type="InterPro" id="IPR012676">
    <property type="entry name" value="TGS-like"/>
</dbReference>
<dbReference type="InterPro" id="IPR002320">
    <property type="entry name" value="Thr-tRNA-ligase_IIa"/>
</dbReference>
<dbReference type="InterPro" id="IPR018163">
    <property type="entry name" value="Thr/Ala-tRNA-synth_IIc_edit"/>
</dbReference>
<dbReference type="InterPro" id="IPR047246">
    <property type="entry name" value="ThrRS_anticodon"/>
</dbReference>
<dbReference type="InterPro" id="IPR033728">
    <property type="entry name" value="ThrRS_core"/>
</dbReference>
<dbReference type="InterPro" id="IPR012947">
    <property type="entry name" value="tRNA_SAD"/>
</dbReference>
<dbReference type="NCBIfam" id="TIGR00418">
    <property type="entry name" value="thrS"/>
    <property type="match status" value="1"/>
</dbReference>
<dbReference type="PANTHER" id="PTHR11451:SF44">
    <property type="entry name" value="THREONINE--TRNA LIGASE, CHLOROPLASTIC_MITOCHONDRIAL 2"/>
    <property type="match status" value="1"/>
</dbReference>
<dbReference type="PANTHER" id="PTHR11451">
    <property type="entry name" value="THREONINE-TRNA LIGASE"/>
    <property type="match status" value="1"/>
</dbReference>
<dbReference type="Pfam" id="PF03129">
    <property type="entry name" value="HGTP_anticodon"/>
    <property type="match status" value="1"/>
</dbReference>
<dbReference type="Pfam" id="PF02824">
    <property type="entry name" value="TGS"/>
    <property type="match status" value="1"/>
</dbReference>
<dbReference type="Pfam" id="PF00587">
    <property type="entry name" value="tRNA-synt_2b"/>
    <property type="match status" value="1"/>
</dbReference>
<dbReference type="Pfam" id="PF07973">
    <property type="entry name" value="tRNA_SAD"/>
    <property type="match status" value="1"/>
</dbReference>
<dbReference type="PRINTS" id="PR01047">
    <property type="entry name" value="TRNASYNTHTHR"/>
</dbReference>
<dbReference type="SMART" id="SM00863">
    <property type="entry name" value="tRNA_SAD"/>
    <property type="match status" value="1"/>
</dbReference>
<dbReference type="SUPFAM" id="SSF52954">
    <property type="entry name" value="Class II aaRS ABD-related"/>
    <property type="match status" value="1"/>
</dbReference>
<dbReference type="SUPFAM" id="SSF55681">
    <property type="entry name" value="Class II aaRS and biotin synthetases"/>
    <property type="match status" value="1"/>
</dbReference>
<dbReference type="SUPFAM" id="SSF81271">
    <property type="entry name" value="TGS-like"/>
    <property type="match status" value="1"/>
</dbReference>
<dbReference type="SUPFAM" id="SSF55186">
    <property type="entry name" value="ThrRS/AlaRS common domain"/>
    <property type="match status" value="1"/>
</dbReference>
<dbReference type="PROSITE" id="PS50862">
    <property type="entry name" value="AA_TRNA_LIGASE_II"/>
    <property type="match status" value="1"/>
</dbReference>
<dbReference type="PROSITE" id="PS51880">
    <property type="entry name" value="TGS"/>
    <property type="match status" value="1"/>
</dbReference>
<evidence type="ECO:0000255" key="1">
    <source>
        <dbReference type="HAMAP-Rule" id="MF_00184"/>
    </source>
</evidence>
<evidence type="ECO:0000255" key="2">
    <source>
        <dbReference type="PROSITE-ProRule" id="PRU01228"/>
    </source>
</evidence>
<accession>Q82VV1</accession>
<feature type="chain" id="PRO_0000101017" description="Threonine--tRNA ligase">
    <location>
        <begin position="1"/>
        <end position="635"/>
    </location>
</feature>
<feature type="domain" description="TGS" evidence="2">
    <location>
        <begin position="1"/>
        <end position="61"/>
    </location>
</feature>
<feature type="region of interest" description="Catalytic" evidence="1">
    <location>
        <begin position="242"/>
        <end position="533"/>
    </location>
</feature>
<feature type="binding site" evidence="1">
    <location>
        <position position="333"/>
    </location>
    <ligand>
        <name>Zn(2+)</name>
        <dbReference type="ChEBI" id="CHEBI:29105"/>
    </ligand>
</feature>
<feature type="binding site" evidence="1">
    <location>
        <position position="384"/>
    </location>
    <ligand>
        <name>Zn(2+)</name>
        <dbReference type="ChEBI" id="CHEBI:29105"/>
    </ligand>
</feature>
<feature type="binding site" evidence="1">
    <location>
        <position position="510"/>
    </location>
    <ligand>
        <name>Zn(2+)</name>
        <dbReference type="ChEBI" id="CHEBI:29105"/>
    </ligand>
</feature>
<comment type="function">
    <text evidence="1">Catalyzes the attachment of threonine to tRNA(Thr) in a two-step reaction: L-threonine is first activated by ATP to form Thr-AMP and then transferred to the acceptor end of tRNA(Thr). Also edits incorrectly charged L-seryl-tRNA(Thr).</text>
</comment>
<comment type="catalytic activity">
    <reaction evidence="1">
        <text>tRNA(Thr) + L-threonine + ATP = L-threonyl-tRNA(Thr) + AMP + diphosphate + H(+)</text>
        <dbReference type="Rhea" id="RHEA:24624"/>
        <dbReference type="Rhea" id="RHEA-COMP:9670"/>
        <dbReference type="Rhea" id="RHEA-COMP:9704"/>
        <dbReference type="ChEBI" id="CHEBI:15378"/>
        <dbReference type="ChEBI" id="CHEBI:30616"/>
        <dbReference type="ChEBI" id="CHEBI:33019"/>
        <dbReference type="ChEBI" id="CHEBI:57926"/>
        <dbReference type="ChEBI" id="CHEBI:78442"/>
        <dbReference type="ChEBI" id="CHEBI:78534"/>
        <dbReference type="ChEBI" id="CHEBI:456215"/>
        <dbReference type="EC" id="6.1.1.3"/>
    </reaction>
</comment>
<comment type="cofactor">
    <cofactor evidence="1">
        <name>Zn(2+)</name>
        <dbReference type="ChEBI" id="CHEBI:29105"/>
    </cofactor>
    <text evidence="1">Binds 1 zinc ion per subunit.</text>
</comment>
<comment type="subunit">
    <text evidence="1">Homodimer.</text>
</comment>
<comment type="subcellular location">
    <subcellularLocation>
        <location evidence="1">Cytoplasm</location>
    </subcellularLocation>
</comment>
<comment type="similarity">
    <text evidence="1">Belongs to the class-II aminoacyl-tRNA synthetase family.</text>
</comment>
<protein>
    <recommendedName>
        <fullName evidence="1">Threonine--tRNA ligase</fullName>
        <ecNumber evidence="1">6.1.1.3</ecNumber>
    </recommendedName>
    <alternativeName>
        <fullName evidence="1">Threonyl-tRNA synthetase</fullName>
        <shortName evidence="1">ThrRS</shortName>
    </alternativeName>
</protein>
<keyword id="KW-0030">Aminoacyl-tRNA synthetase</keyword>
<keyword id="KW-0067">ATP-binding</keyword>
<keyword id="KW-0963">Cytoplasm</keyword>
<keyword id="KW-0436">Ligase</keyword>
<keyword id="KW-0479">Metal-binding</keyword>
<keyword id="KW-0547">Nucleotide-binding</keyword>
<keyword id="KW-0648">Protein biosynthesis</keyword>
<keyword id="KW-1185">Reference proteome</keyword>
<keyword id="KW-0694">RNA-binding</keyword>
<keyword id="KW-0820">tRNA-binding</keyword>
<keyword id="KW-0862">Zinc</keyword>